<name>COX2_GERRO</name>
<reference key="1">
    <citation type="journal article" date="2005" name="Mol. Phylogenet. Evol.">
        <title>Multigene phylogeny of the Old World mice, Murinae, reveals distinct geographic lineages and the declining utility of mitochondrial genes compared to nuclear genes.</title>
        <authorList>
            <person name="Steppan S.J."/>
            <person name="Adkins R.M."/>
            <person name="Spinks P.Q."/>
            <person name="Hale C."/>
        </authorList>
    </citation>
    <scope>NUCLEOTIDE SEQUENCE [GENOMIC DNA]</scope>
</reference>
<keyword id="KW-0186">Copper</keyword>
<keyword id="KW-0249">Electron transport</keyword>
<keyword id="KW-0460">Magnesium</keyword>
<keyword id="KW-0472">Membrane</keyword>
<keyword id="KW-0479">Metal-binding</keyword>
<keyword id="KW-0496">Mitochondrion</keyword>
<keyword id="KW-0999">Mitochondrion inner membrane</keyword>
<keyword id="KW-0679">Respiratory chain</keyword>
<keyword id="KW-1278">Translocase</keyword>
<keyword id="KW-0812">Transmembrane</keyword>
<keyword id="KW-1133">Transmembrane helix</keyword>
<keyword id="KW-0813">Transport</keyword>
<geneLocation type="mitochondrion"/>
<sequence>MAYPFQLGLQDATSPIMEELTNFHDHTLMIVFLISSLVLYLISLMLSTKLIHTSTMDAQEVETIWTILPAIILIMIALPSLRILYMMDEINNPALTVKTMGHQWYWSYEYTDYEDLSFDSYMIPTNELKPGELRLLEVDNRVILPMELPIRMLISSEDVLHSWAVPSLGLKTDAIPGRLNQATVMSNRPGIFYGQCSEICGSNHSFMPIVLEMIPLKLFENWSISMS</sequence>
<proteinExistence type="inferred from homology"/>
<gene>
    <name type="primary">MT-CO2</name>
    <name type="synonym">COII</name>
    <name type="synonym">COX2</name>
    <name type="synonym">COXII</name>
    <name type="synonym">MTCO2</name>
</gene>
<evidence type="ECO:0000250" key="1">
    <source>
        <dbReference type="UniProtKB" id="P00403"/>
    </source>
</evidence>
<evidence type="ECO:0000250" key="2">
    <source>
        <dbReference type="UniProtKB" id="P00410"/>
    </source>
</evidence>
<evidence type="ECO:0000250" key="3">
    <source>
        <dbReference type="UniProtKB" id="P68530"/>
    </source>
</evidence>
<evidence type="ECO:0000305" key="4"/>
<comment type="function">
    <text evidence="2">Component of the cytochrome c oxidase, the last enzyme in the mitochondrial electron transport chain which drives oxidative phosphorylation. The respiratory chain contains 3 multisubunit complexes succinate dehydrogenase (complex II, CII), ubiquinol-cytochrome c oxidoreductase (cytochrome b-c1 complex, complex III, CIII) and cytochrome c oxidase (complex IV, CIV), that cooperate to transfer electrons derived from NADH and succinate to molecular oxygen, creating an electrochemical gradient over the inner membrane that drives transmembrane transport and the ATP synthase. Cytochrome c oxidase is the component of the respiratory chain that catalyzes the reduction of oxygen to water. Electrons originating from reduced cytochrome c in the intermembrane space (IMS) are transferred via the dinuclear copper A center (CU(A)) of subunit 2 and heme A of subunit 1 to the active site in subunit 1, a binuclear center (BNC) formed by heme A3 and copper B (CU(B)). The BNC reduces molecular oxygen to 2 water molecules using 4 electrons from cytochrome c in the IMS and 4 protons from the mitochondrial matrix.</text>
</comment>
<comment type="catalytic activity">
    <reaction evidence="2">
        <text>4 Fe(II)-[cytochrome c] + O2 + 8 H(+)(in) = 4 Fe(III)-[cytochrome c] + 2 H2O + 4 H(+)(out)</text>
        <dbReference type="Rhea" id="RHEA:11436"/>
        <dbReference type="Rhea" id="RHEA-COMP:10350"/>
        <dbReference type="Rhea" id="RHEA-COMP:14399"/>
        <dbReference type="ChEBI" id="CHEBI:15377"/>
        <dbReference type="ChEBI" id="CHEBI:15378"/>
        <dbReference type="ChEBI" id="CHEBI:15379"/>
        <dbReference type="ChEBI" id="CHEBI:29033"/>
        <dbReference type="ChEBI" id="CHEBI:29034"/>
        <dbReference type="EC" id="7.1.1.9"/>
    </reaction>
    <physiologicalReaction direction="left-to-right" evidence="2">
        <dbReference type="Rhea" id="RHEA:11437"/>
    </physiologicalReaction>
</comment>
<comment type="cofactor">
    <cofactor evidence="3">
        <name>Cu cation</name>
        <dbReference type="ChEBI" id="CHEBI:23378"/>
    </cofactor>
    <text evidence="3">Binds a dinuclear copper A center per subunit.</text>
</comment>
<comment type="subunit">
    <text evidence="1 3">Component of the cytochrome c oxidase (complex IV, CIV), a multisubunit enzyme composed of 14 subunits. The complex is composed of a catalytic core of 3 subunits MT-CO1, MT-CO2 and MT-CO3, encoded in the mitochondrial DNA, and 11 supernumerary subunits COX4I, COX5A, COX5B, COX6A, COX6B, COX6C, COX7A, COX7B, COX7C, COX8 and NDUFA4, which are encoded in the nuclear genome. The complex exists as a monomer or a dimer and forms supercomplexes (SCs) in the inner mitochondrial membrane with NADH-ubiquinone oxidoreductase (complex I, CI) and ubiquinol-cytochrome c oxidoreductase (cytochrome b-c1 complex, complex III, CIII), resulting in different assemblies (supercomplex SCI(1)III(2)IV(1) and megacomplex MCI(2)III(2)IV(2)) (By similarity). Found in a complex with TMEM177, COA6, COX18, COX20, SCO1 and SCO2. Interacts with TMEM177 in a COX20-dependent manner. Interacts with COX20. Interacts with COX16 (By similarity).</text>
</comment>
<comment type="subcellular location">
    <subcellularLocation>
        <location evidence="3">Mitochondrion inner membrane</location>
        <topology evidence="3">Multi-pass membrane protein</topology>
    </subcellularLocation>
</comment>
<comment type="similarity">
    <text evidence="4">Belongs to the cytochrome c oxidase subunit 2 family.</text>
</comment>
<dbReference type="EC" id="7.1.1.9"/>
<dbReference type="EMBL" id="DQ019084">
    <property type="protein sequence ID" value="ABA28344.1"/>
    <property type="molecule type" value="Genomic_DNA"/>
</dbReference>
<dbReference type="SMR" id="Q38S56"/>
<dbReference type="GO" id="GO:0005743">
    <property type="term" value="C:mitochondrial inner membrane"/>
    <property type="evidence" value="ECO:0007669"/>
    <property type="project" value="UniProtKB-SubCell"/>
</dbReference>
<dbReference type="GO" id="GO:0045277">
    <property type="term" value="C:respiratory chain complex IV"/>
    <property type="evidence" value="ECO:0000250"/>
    <property type="project" value="UniProtKB"/>
</dbReference>
<dbReference type="GO" id="GO:0005507">
    <property type="term" value="F:copper ion binding"/>
    <property type="evidence" value="ECO:0007669"/>
    <property type="project" value="InterPro"/>
</dbReference>
<dbReference type="GO" id="GO:0004129">
    <property type="term" value="F:cytochrome-c oxidase activity"/>
    <property type="evidence" value="ECO:0007669"/>
    <property type="project" value="UniProtKB-EC"/>
</dbReference>
<dbReference type="GO" id="GO:0042773">
    <property type="term" value="P:ATP synthesis coupled electron transport"/>
    <property type="evidence" value="ECO:0007669"/>
    <property type="project" value="TreeGrafter"/>
</dbReference>
<dbReference type="CDD" id="cd13912">
    <property type="entry name" value="CcO_II_C"/>
    <property type="match status" value="1"/>
</dbReference>
<dbReference type="FunFam" id="1.10.287.90:FF:000001">
    <property type="entry name" value="Cytochrome c oxidase subunit 2"/>
    <property type="match status" value="1"/>
</dbReference>
<dbReference type="FunFam" id="2.60.40.420:FF:000001">
    <property type="entry name" value="Cytochrome c oxidase subunit 2"/>
    <property type="match status" value="1"/>
</dbReference>
<dbReference type="Gene3D" id="1.10.287.90">
    <property type="match status" value="1"/>
</dbReference>
<dbReference type="Gene3D" id="2.60.40.420">
    <property type="entry name" value="Cupredoxins - blue copper proteins"/>
    <property type="match status" value="1"/>
</dbReference>
<dbReference type="InterPro" id="IPR045187">
    <property type="entry name" value="CcO_II"/>
</dbReference>
<dbReference type="InterPro" id="IPR002429">
    <property type="entry name" value="CcO_II-like_C"/>
</dbReference>
<dbReference type="InterPro" id="IPR034210">
    <property type="entry name" value="CcO_II_C"/>
</dbReference>
<dbReference type="InterPro" id="IPR001505">
    <property type="entry name" value="Copper_CuA"/>
</dbReference>
<dbReference type="InterPro" id="IPR008972">
    <property type="entry name" value="Cupredoxin"/>
</dbReference>
<dbReference type="InterPro" id="IPR014222">
    <property type="entry name" value="Cyt_c_oxidase_su2"/>
</dbReference>
<dbReference type="InterPro" id="IPR011759">
    <property type="entry name" value="Cyt_c_oxidase_su2_TM_dom"/>
</dbReference>
<dbReference type="InterPro" id="IPR036257">
    <property type="entry name" value="Cyt_c_oxidase_su2_TM_sf"/>
</dbReference>
<dbReference type="NCBIfam" id="TIGR02866">
    <property type="entry name" value="CoxB"/>
    <property type="match status" value="1"/>
</dbReference>
<dbReference type="PANTHER" id="PTHR22888:SF9">
    <property type="entry name" value="CYTOCHROME C OXIDASE SUBUNIT 2"/>
    <property type="match status" value="1"/>
</dbReference>
<dbReference type="PANTHER" id="PTHR22888">
    <property type="entry name" value="CYTOCHROME C OXIDASE, SUBUNIT II"/>
    <property type="match status" value="1"/>
</dbReference>
<dbReference type="Pfam" id="PF00116">
    <property type="entry name" value="COX2"/>
    <property type="match status" value="1"/>
</dbReference>
<dbReference type="Pfam" id="PF02790">
    <property type="entry name" value="COX2_TM"/>
    <property type="match status" value="1"/>
</dbReference>
<dbReference type="PRINTS" id="PR01166">
    <property type="entry name" value="CYCOXIDASEII"/>
</dbReference>
<dbReference type="SUPFAM" id="SSF49503">
    <property type="entry name" value="Cupredoxins"/>
    <property type="match status" value="1"/>
</dbReference>
<dbReference type="SUPFAM" id="SSF81464">
    <property type="entry name" value="Cytochrome c oxidase subunit II-like, transmembrane region"/>
    <property type="match status" value="1"/>
</dbReference>
<dbReference type="PROSITE" id="PS00078">
    <property type="entry name" value="COX2"/>
    <property type="match status" value="1"/>
</dbReference>
<dbReference type="PROSITE" id="PS50857">
    <property type="entry name" value="COX2_CUA"/>
    <property type="match status" value="1"/>
</dbReference>
<dbReference type="PROSITE" id="PS50999">
    <property type="entry name" value="COX2_TM"/>
    <property type="match status" value="1"/>
</dbReference>
<accession>Q38S56</accession>
<protein>
    <recommendedName>
        <fullName>Cytochrome c oxidase subunit 2</fullName>
        <ecNumber>7.1.1.9</ecNumber>
    </recommendedName>
    <alternativeName>
        <fullName>Cytochrome c oxidase polypeptide II</fullName>
    </alternativeName>
</protein>
<feature type="chain" id="PRO_0000254944" description="Cytochrome c oxidase subunit 2">
    <location>
        <begin position="1"/>
        <end position="227"/>
    </location>
</feature>
<feature type="topological domain" description="Mitochondrial intermembrane" evidence="3">
    <location>
        <begin position="1"/>
        <end position="14"/>
    </location>
</feature>
<feature type="transmembrane region" description="Helical; Name=I" evidence="3">
    <location>
        <begin position="15"/>
        <end position="45"/>
    </location>
</feature>
<feature type="topological domain" description="Mitochondrial matrix" evidence="3">
    <location>
        <begin position="46"/>
        <end position="59"/>
    </location>
</feature>
<feature type="transmembrane region" description="Helical; Name=II" evidence="3">
    <location>
        <begin position="60"/>
        <end position="87"/>
    </location>
</feature>
<feature type="topological domain" description="Mitochondrial intermembrane" evidence="3">
    <location>
        <begin position="88"/>
        <end position="227"/>
    </location>
</feature>
<feature type="binding site" evidence="3">
    <location>
        <position position="161"/>
    </location>
    <ligand>
        <name>Cu cation</name>
        <dbReference type="ChEBI" id="CHEBI:23378"/>
        <label>A1</label>
    </ligand>
</feature>
<feature type="binding site" evidence="3">
    <location>
        <position position="196"/>
    </location>
    <ligand>
        <name>Cu cation</name>
        <dbReference type="ChEBI" id="CHEBI:23378"/>
        <label>A1</label>
    </ligand>
</feature>
<feature type="binding site" evidence="3">
    <location>
        <position position="196"/>
    </location>
    <ligand>
        <name>Cu cation</name>
        <dbReference type="ChEBI" id="CHEBI:23378"/>
        <label>A2</label>
    </ligand>
</feature>
<feature type="binding site" evidence="3">
    <location>
        <position position="198"/>
    </location>
    <ligand>
        <name>Cu cation</name>
        <dbReference type="ChEBI" id="CHEBI:23378"/>
        <label>A2</label>
    </ligand>
</feature>
<feature type="binding site" evidence="3">
    <location>
        <position position="198"/>
    </location>
    <ligand>
        <name>Mg(2+)</name>
        <dbReference type="ChEBI" id="CHEBI:18420"/>
        <note>ligand shared with MT-CO1</note>
    </ligand>
</feature>
<feature type="binding site" evidence="3">
    <location>
        <position position="200"/>
    </location>
    <ligand>
        <name>Cu cation</name>
        <dbReference type="ChEBI" id="CHEBI:23378"/>
        <label>A1</label>
    </ligand>
</feature>
<feature type="binding site" evidence="3">
    <location>
        <position position="200"/>
    </location>
    <ligand>
        <name>Cu cation</name>
        <dbReference type="ChEBI" id="CHEBI:23378"/>
        <label>A2</label>
    </ligand>
</feature>
<feature type="binding site" evidence="3">
    <location>
        <position position="204"/>
    </location>
    <ligand>
        <name>Cu cation</name>
        <dbReference type="ChEBI" id="CHEBI:23378"/>
        <label>A2</label>
    </ligand>
</feature>
<feature type="binding site" evidence="3">
    <location>
        <position position="207"/>
    </location>
    <ligand>
        <name>Cu cation</name>
        <dbReference type="ChEBI" id="CHEBI:23378"/>
        <label>A1</label>
    </ligand>
</feature>
<organism>
    <name type="scientific">Gerbilliscus robustus</name>
    <name type="common">Fringe-tailed gerbil</name>
    <name type="synonym">Tatera robusta</name>
    <dbReference type="NCBI Taxonomy" id="410303"/>
    <lineage>
        <taxon>Eukaryota</taxon>
        <taxon>Metazoa</taxon>
        <taxon>Chordata</taxon>
        <taxon>Craniata</taxon>
        <taxon>Vertebrata</taxon>
        <taxon>Euteleostomi</taxon>
        <taxon>Mammalia</taxon>
        <taxon>Eutheria</taxon>
        <taxon>Euarchontoglires</taxon>
        <taxon>Glires</taxon>
        <taxon>Rodentia</taxon>
        <taxon>Myomorpha</taxon>
        <taxon>Muroidea</taxon>
        <taxon>Muridae</taxon>
        <taxon>Gerbillinae</taxon>
        <taxon>Gerbilliscus</taxon>
    </lineage>
</organism>